<gene>
    <name type="primary">Crk</name>
    <name type="ORF">CG1587</name>
</gene>
<sequence>MDTFDVSDRNSWYFGPMSRQDATEVLMNERERGVFLVRDSNSIAGDYVLCVREDTKVSNYIINKVQQQDQIVYRIGDQSFDNLPKLLTFYTLHYLDTTPLKRPACRRVEKVIGKFDFVGSDQDDLPFQRGEVLTIVRKDEDQWWTARNSSGKIGQIPVPYIQQYDDYMDEDAIDKNEPSISGSSNVFESTLKRTDLNRKLPAYARVKQSRVPNAYDKTALKLEIGDIIKVTKTNINGQWEGELNGKNGHFPFTHVEFVDDCDLSKNSTEIC</sequence>
<protein>
    <recommendedName>
        <fullName>Adapter molecule Crk</fullName>
    </recommendedName>
</protein>
<reference key="1">
    <citation type="journal article" date="1999" name="Gene">
        <title>Identification of a Drosophila homologue to vertebrate Crk by interaction with MBC.</title>
        <authorList>
            <person name="Galletta B.J."/>
            <person name="Niu X.-P."/>
            <person name="Erickson M.R."/>
            <person name="Abmayr S.M."/>
        </authorList>
    </citation>
    <scope>NUCLEOTIDE SEQUENCE [MRNA]</scope>
    <scope>FUNCTION</scope>
    <scope>TISSUE SPECIFICITY</scope>
    <scope>DEVELOPMENTAL STAGE</scope>
    <source>
        <tissue>Embryo</tissue>
    </source>
</reference>
<reference key="2">
    <citation type="journal article" date="2000" name="Science">
        <title>The genome sequence of Drosophila melanogaster.</title>
        <authorList>
            <person name="Adams M.D."/>
            <person name="Celniker S.E."/>
            <person name="Holt R.A."/>
            <person name="Evans C.A."/>
            <person name="Gocayne J.D."/>
            <person name="Amanatides P.G."/>
            <person name="Scherer S.E."/>
            <person name="Li P.W."/>
            <person name="Hoskins R.A."/>
            <person name="Galle R.F."/>
            <person name="George R.A."/>
            <person name="Lewis S.E."/>
            <person name="Richards S."/>
            <person name="Ashburner M."/>
            <person name="Henderson S.N."/>
            <person name="Sutton G.G."/>
            <person name="Wortman J.R."/>
            <person name="Yandell M.D."/>
            <person name="Zhang Q."/>
            <person name="Chen L.X."/>
            <person name="Brandon R.C."/>
            <person name="Rogers Y.-H.C."/>
            <person name="Blazej R.G."/>
            <person name="Champe M."/>
            <person name="Pfeiffer B.D."/>
            <person name="Wan K.H."/>
            <person name="Doyle C."/>
            <person name="Baxter E.G."/>
            <person name="Helt G."/>
            <person name="Nelson C.R."/>
            <person name="Miklos G.L.G."/>
            <person name="Abril J.F."/>
            <person name="Agbayani A."/>
            <person name="An H.-J."/>
            <person name="Andrews-Pfannkoch C."/>
            <person name="Baldwin D."/>
            <person name="Ballew R.M."/>
            <person name="Basu A."/>
            <person name="Baxendale J."/>
            <person name="Bayraktaroglu L."/>
            <person name="Beasley E.M."/>
            <person name="Beeson K.Y."/>
            <person name="Benos P.V."/>
            <person name="Berman B.P."/>
            <person name="Bhandari D."/>
            <person name="Bolshakov S."/>
            <person name="Borkova D."/>
            <person name="Botchan M.R."/>
            <person name="Bouck J."/>
            <person name="Brokstein P."/>
            <person name="Brottier P."/>
            <person name="Burtis K.C."/>
            <person name="Busam D.A."/>
            <person name="Butler H."/>
            <person name="Cadieu E."/>
            <person name="Center A."/>
            <person name="Chandra I."/>
            <person name="Cherry J.M."/>
            <person name="Cawley S."/>
            <person name="Dahlke C."/>
            <person name="Davenport L.B."/>
            <person name="Davies P."/>
            <person name="de Pablos B."/>
            <person name="Delcher A."/>
            <person name="Deng Z."/>
            <person name="Mays A.D."/>
            <person name="Dew I."/>
            <person name="Dietz S.M."/>
            <person name="Dodson K."/>
            <person name="Doup L.E."/>
            <person name="Downes M."/>
            <person name="Dugan-Rocha S."/>
            <person name="Dunkov B.C."/>
            <person name="Dunn P."/>
            <person name="Durbin K.J."/>
            <person name="Evangelista C.C."/>
            <person name="Ferraz C."/>
            <person name="Ferriera S."/>
            <person name="Fleischmann W."/>
            <person name="Fosler C."/>
            <person name="Gabrielian A.E."/>
            <person name="Garg N.S."/>
            <person name="Gelbart W.M."/>
            <person name="Glasser K."/>
            <person name="Glodek A."/>
            <person name="Gong F."/>
            <person name="Gorrell J.H."/>
            <person name="Gu Z."/>
            <person name="Guan P."/>
            <person name="Harris M."/>
            <person name="Harris N.L."/>
            <person name="Harvey D.A."/>
            <person name="Heiman T.J."/>
            <person name="Hernandez J.R."/>
            <person name="Houck J."/>
            <person name="Hostin D."/>
            <person name="Houston K.A."/>
            <person name="Howland T.J."/>
            <person name="Wei M.-H."/>
            <person name="Ibegwam C."/>
            <person name="Jalali M."/>
            <person name="Kalush F."/>
            <person name="Karpen G.H."/>
            <person name="Ke Z."/>
            <person name="Kennison J.A."/>
            <person name="Ketchum K.A."/>
            <person name="Kimmel B.E."/>
            <person name="Kodira C.D."/>
            <person name="Kraft C.L."/>
            <person name="Kravitz S."/>
            <person name="Kulp D."/>
            <person name="Lai Z."/>
            <person name="Lasko P."/>
            <person name="Lei Y."/>
            <person name="Levitsky A.A."/>
            <person name="Li J.H."/>
            <person name="Li Z."/>
            <person name="Liang Y."/>
            <person name="Lin X."/>
            <person name="Liu X."/>
            <person name="Mattei B."/>
            <person name="McIntosh T.C."/>
            <person name="McLeod M.P."/>
            <person name="McPherson D."/>
            <person name="Merkulov G."/>
            <person name="Milshina N.V."/>
            <person name="Mobarry C."/>
            <person name="Morris J."/>
            <person name="Moshrefi A."/>
            <person name="Mount S.M."/>
            <person name="Moy M."/>
            <person name="Murphy B."/>
            <person name="Murphy L."/>
            <person name="Muzny D.M."/>
            <person name="Nelson D.L."/>
            <person name="Nelson D.R."/>
            <person name="Nelson K.A."/>
            <person name="Nixon K."/>
            <person name="Nusskern D.R."/>
            <person name="Pacleb J.M."/>
            <person name="Palazzolo M."/>
            <person name="Pittman G.S."/>
            <person name="Pan S."/>
            <person name="Pollard J."/>
            <person name="Puri V."/>
            <person name="Reese M.G."/>
            <person name="Reinert K."/>
            <person name="Remington K."/>
            <person name="Saunders R.D.C."/>
            <person name="Scheeler F."/>
            <person name="Shen H."/>
            <person name="Shue B.C."/>
            <person name="Siden-Kiamos I."/>
            <person name="Simpson M."/>
            <person name="Skupski M.P."/>
            <person name="Smith T.J."/>
            <person name="Spier E."/>
            <person name="Spradling A.C."/>
            <person name="Stapleton M."/>
            <person name="Strong R."/>
            <person name="Sun E."/>
            <person name="Svirskas R."/>
            <person name="Tector C."/>
            <person name="Turner R."/>
            <person name="Venter E."/>
            <person name="Wang A.H."/>
            <person name="Wang X."/>
            <person name="Wang Z.-Y."/>
            <person name="Wassarman D.A."/>
            <person name="Weinstock G.M."/>
            <person name="Weissenbach J."/>
            <person name="Williams S.M."/>
            <person name="Woodage T."/>
            <person name="Worley K.C."/>
            <person name="Wu D."/>
            <person name="Yang S."/>
            <person name="Yao Q.A."/>
            <person name="Ye J."/>
            <person name="Yeh R.-F."/>
            <person name="Zaveri J.S."/>
            <person name="Zhan M."/>
            <person name="Zhang G."/>
            <person name="Zhao Q."/>
            <person name="Zheng L."/>
            <person name="Zheng X.H."/>
            <person name="Zhong F.N."/>
            <person name="Zhong W."/>
            <person name="Zhou X."/>
            <person name="Zhu S.C."/>
            <person name="Zhu X."/>
            <person name="Smith H.O."/>
            <person name="Gibbs R.A."/>
            <person name="Myers E.W."/>
            <person name="Rubin G.M."/>
            <person name="Venter J.C."/>
        </authorList>
    </citation>
    <scope>NUCLEOTIDE SEQUENCE [LARGE SCALE GENOMIC DNA]</scope>
    <source>
        <strain>Berkeley</strain>
    </source>
</reference>
<reference key="3">
    <citation type="journal article" date="2002" name="Genome Biol.">
        <title>Annotation of the Drosophila melanogaster euchromatic genome: a systematic review.</title>
        <authorList>
            <person name="Misra S."/>
            <person name="Crosby M.A."/>
            <person name="Mungall C.J."/>
            <person name="Matthews B.B."/>
            <person name="Campbell K.S."/>
            <person name="Hradecky P."/>
            <person name="Huang Y."/>
            <person name="Kaminker J.S."/>
            <person name="Millburn G.H."/>
            <person name="Prochnik S.E."/>
            <person name="Smith C.D."/>
            <person name="Tupy J.L."/>
            <person name="Whitfield E.J."/>
            <person name="Bayraktaroglu L."/>
            <person name="Berman B.P."/>
            <person name="Bettencourt B.R."/>
            <person name="Celniker S.E."/>
            <person name="de Grey A.D.N.J."/>
            <person name="Drysdale R.A."/>
            <person name="Harris N.L."/>
            <person name="Richter J."/>
            <person name="Russo S."/>
            <person name="Schroeder A.J."/>
            <person name="Shu S.Q."/>
            <person name="Stapleton M."/>
            <person name="Yamada C."/>
            <person name="Ashburner M."/>
            <person name="Gelbart W.M."/>
            <person name="Rubin G.M."/>
            <person name="Lewis S.E."/>
        </authorList>
    </citation>
    <scope>GENOME REANNOTATION</scope>
    <source>
        <strain>Berkeley</strain>
    </source>
</reference>
<reference key="4">
    <citation type="submission" date="2004-04" db="EMBL/GenBank/DDBJ databases">
        <authorList>
            <person name="Stapleton M."/>
            <person name="Carlson J."/>
            <person name="Chavez C."/>
            <person name="Frise E."/>
            <person name="George R."/>
            <person name="Pacleb J."/>
            <person name="Park S."/>
            <person name="Wan K."/>
            <person name="Yu C."/>
            <person name="Rubin G.M."/>
            <person name="Celniker S."/>
        </authorList>
    </citation>
    <scope>NUCLEOTIDE SEQUENCE [LARGE SCALE MRNA]</scope>
    <source>
        <strain>Berkeley</strain>
        <tissue>Embryo</tissue>
    </source>
</reference>
<evidence type="ECO:0000255" key="1">
    <source>
        <dbReference type="PROSITE-ProRule" id="PRU00191"/>
    </source>
</evidence>
<evidence type="ECO:0000255" key="2">
    <source>
        <dbReference type="PROSITE-ProRule" id="PRU00192"/>
    </source>
</evidence>
<evidence type="ECO:0000269" key="3">
    <source>
    </source>
</evidence>
<evidence type="ECO:0000305" key="4"/>
<name>CRK_DROME</name>
<feature type="chain" id="PRO_0000079350" description="Adapter molecule Crk">
    <location>
        <begin position="1"/>
        <end position="271"/>
    </location>
</feature>
<feature type="domain" description="SH2" evidence="1">
    <location>
        <begin position="12"/>
        <end position="104"/>
    </location>
</feature>
<feature type="domain" description="SH3 1" evidence="2">
    <location>
        <begin position="106"/>
        <end position="166"/>
    </location>
</feature>
<feature type="domain" description="SH3 2" evidence="2">
    <location>
        <begin position="199"/>
        <end position="260"/>
    </location>
</feature>
<organism>
    <name type="scientific">Drosophila melanogaster</name>
    <name type="common">Fruit fly</name>
    <dbReference type="NCBI Taxonomy" id="7227"/>
    <lineage>
        <taxon>Eukaryota</taxon>
        <taxon>Metazoa</taxon>
        <taxon>Ecdysozoa</taxon>
        <taxon>Arthropoda</taxon>
        <taxon>Hexapoda</taxon>
        <taxon>Insecta</taxon>
        <taxon>Pterygota</taxon>
        <taxon>Neoptera</taxon>
        <taxon>Endopterygota</taxon>
        <taxon>Diptera</taxon>
        <taxon>Brachycera</taxon>
        <taxon>Muscomorpha</taxon>
        <taxon>Ephydroidea</taxon>
        <taxon>Drosophilidae</taxon>
        <taxon>Drosophila</taxon>
        <taxon>Sophophora</taxon>
    </lineage>
</organism>
<dbReference type="EMBL" id="AF112976">
    <property type="protein sequence ID" value="AAD28428.1"/>
    <property type="molecule type" value="mRNA"/>
</dbReference>
<dbReference type="EMBL" id="AE014135">
    <property type="protein sequence ID" value="AAF59362.1"/>
    <property type="molecule type" value="Genomic_DNA"/>
</dbReference>
<dbReference type="EMBL" id="AE014135">
    <property type="protein sequence ID" value="AAN06519.1"/>
    <property type="molecule type" value="Genomic_DNA"/>
</dbReference>
<dbReference type="EMBL" id="BT012456">
    <property type="protein sequence ID" value="AAS93727.1"/>
    <property type="molecule type" value="mRNA"/>
</dbReference>
<dbReference type="RefSeq" id="NP_651908.1">
    <property type="nucleotide sequence ID" value="NM_143651.6"/>
</dbReference>
<dbReference type="RefSeq" id="NP_726549.1">
    <property type="nucleotide sequence ID" value="NM_166743.3"/>
</dbReference>
<dbReference type="SMR" id="Q9XYM0"/>
<dbReference type="BioGRID" id="68612">
    <property type="interactions" value="61"/>
</dbReference>
<dbReference type="DIP" id="DIP-21287N"/>
<dbReference type="FunCoup" id="Q9XYM0">
    <property type="interactions" value="1351"/>
</dbReference>
<dbReference type="IntAct" id="Q9XYM0">
    <property type="interactions" value="24"/>
</dbReference>
<dbReference type="MINT" id="Q9XYM0"/>
<dbReference type="STRING" id="7227.FBpp0088182"/>
<dbReference type="PaxDb" id="7227-FBpp0088181"/>
<dbReference type="DNASU" id="43775"/>
<dbReference type="EnsemblMetazoa" id="FBtr0089112">
    <property type="protein sequence ID" value="FBpp0088181"/>
    <property type="gene ID" value="FBgn0024811"/>
</dbReference>
<dbReference type="EnsemblMetazoa" id="FBtr0089113">
    <property type="protein sequence ID" value="FBpp0088182"/>
    <property type="gene ID" value="FBgn0024811"/>
</dbReference>
<dbReference type="GeneID" id="43775"/>
<dbReference type="KEGG" id="dme:Dmel_CG1587"/>
<dbReference type="UCSC" id="CG1587-RA">
    <property type="organism name" value="d. melanogaster"/>
</dbReference>
<dbReference type="AGR" id="FB:FBgn0024811"/>
<dbReference type="CTD" id="1398"/>
<dbReference type="FlyBase" id="FBgn0024811">
    <property type="gene designation" value="Crk"/>
</dbReference>
<dbReference type="VEuPathDB" id="VectorBase:FBgn0024811"/>
<dbReference type="eggNOG" id="KOG4792">
    <property type="taxonomic scope" value="Eukaryota"/>
</dbReference>
<dbReference type="GeneTree" id="ENSGT00820000127055"/>
<dbReference type="HOGENOM" id="CLU_060542_0_0_1"/>
<dbReference type="InParanoid" id="Q9XYM0"/>
<dbReference type="OrthoDB" id="9204160at2759"/>
<dbReference type="PhylomeDB" id="Q9XYM0"/>
<dbReference type="Reactome" id="R-DME-186763">
    <property type="pathway name" value="Downstream signal transduction"/>
</dbReference>
<dbReference type="Reactome" id="R-DME-4420097">
    <property type="pathway name" value="VEGFA-VEGFR2 Pathway"/>
</dbReference>
<dbReference type="Reactome" id="R-DME-8849471">
    <property type="pathway name" value="PTK6 Regulates RHO GTPases, RAS GTPase and MAP kinases"/>
</dbReference>
<dbReference type="Reactome" id="R-DME-9027284">
    <property type="pathway name" value="Erythropoietin activates RAS"/>
</dbReference>
<dbReference type="Reactome" id="R-DME-912631">
    <property type="pathway name" value="Regulation of signaling by CBL"/>
</dbReference>
<dbReference type="SignaLink" id="Q9XYM0"/>
<dbReference type="BioGRID-ORCS" id="43775">
    <property type="hits" value="0 hits in 3 CRISPR screens"/>
</dbReference>
<dbReference type="GenomeRNAi" id="43775"/>
<dbReference type="PRO" id="PR:Q9XYM0"/>
<dbReference type="Proteomes" id="UP000000803">
    <property type="component" value="Chromosome 4"/>
</dbReference>
<dbReference type="Bgee" id="FBgn0024811">
    <property type="expression patterns" value="Expressed in cleaving embryo and 265 other cell types or tissues"/>
</dbReference>
<dbReference type="ExpressionAtlas" id="Q9XYM0">
    <property type="expression patterns" value="baseline and differential"/>
</dbReference>
<dbReference type="GO" id="GO:0005737">
    <property type="term" value="C:cytoplasm"/>
    <property type="evidence" value="ECO:0000318"/>
    <property type="project" value="GO_Central"/>
</dbReference>
<dbReference type="GO" id="GO:0030971">
    <property type="term" value="F:receptor tyrosine kinase binding"/>
    <property type="evidence" value="ECO:0000353"/>
    <property type="project" value="FlyBase"/>
</dbReference>
<dbReference type="GO" id="GO:0035591">
    <property type="term" value="F:signaling adaptor activity"/>
    <property type="evidence" value="ECO:0000318"/>
    <property type="project" value="GO_Central"/>
</dbReference>
<dbReference type="GO" id="GO:0007298">
    <property type="term" value="P:border follicle cell migration"/>
    <property type="evidence" value="ECO:0000315"/>
    <property type="project" value="FlyBase"/>
</dbReference>
<dbReference type="GO" id="GO:0016477">
    <property type="term" value="P:cell migration"/>
    <property type="evidence" value="ECO:0000318"/>
    <property type="project" value="GO_Central"/>
</dbReference>
<dbReference type="GO" id="GO:0007167">
    <property type="term" value="P:enzyme-linked receptor protein signaling pathway"/>
    <property type="evidence" value="ECO:0000318"/>
    <property type="project" value="GO_Central"/>
</dbReference>
<dbReference type="GO" id="GO:0048013">
    <property type="term" value="P:ephrin receptor signaling pathway"/>
    <property type="evidence" value="ECO:0000250"/>
    <property type="project" value="UniProtKB"/>
</dbReference>
<dbReference type="GO" id="GO:0046529">
    <property type="term" value="P:imaginal disc fusion, thorax closure"/>
    <property type="evidence" value="ECO:0000316"/>
    <property type="project" value="FlyBase"/>
</dbReference>
<dbReference type="GO" id="GO:0007520">
    <property type="term" value="P:myoblast fusion"/>
    <property type="evidence" value="ECO:0000304"/>
    <property type="project" value="FlyBase"/>
</dbReference>
<dbReference type="GO" id="GO:0006911">
    <property type="term" value="P:phagocytosis, engulfment"/>
    <property type="evidence" value="ECO:0000315"/>
    <property type="project" value="FlyBase"/>
</dbReference>
<dbReference type="GO" id="GO:0046330">
    <property type="term" value="P:positive regulation of JNK cascade"/>
    <property type="evidence" value="ECO:0000314"/>
    <property type="project" value="FlyBase"/>
</dbReference>
<dbReference type="GO" id="GO:0032956">
    <property type="term" value="P:regulation of actin cytoskeleton organization"/>
    <property type="evidence" value="ECO:0000250"/>
    <property type="project" value="UniProtKB"/>
</dbReference>
<dbReference type="GO" id="GO:0043087">
    <property type="term" value="P:regulation of GTPase activity"/>
    <property type="evidence" value="ECO:0000250"/>
    <property type="project" value="UniProtKB"/>
</dbReference>
<dbReference type="GO" id="GO:0048010">
    <property type="term" value="P:vascular endothelial growth factor receptor signaling pathway"/>
    <property type="evidence" value="ECO:0000315"/>
    <property type="project" value="FlyBase"/>
</dbReference>
<dbReference type="CDD" id="cd09926">
    <property type="entry name" value="SH2_CRK_like"/>
    <property type="match status" value="1"/>
</dbReference>
<dbReference type="CDD" id="cd11759">
    <property type="entry name" value="SH3_CRK_C"/>
    <property type="match status" value="1"/>
</dbReference>
<dbReference type="CDD" id="cd11758">
    <property type="entry name" value="SH3_CRK_N"/>
    <property type="match status" value="1"/>
</dbReference>
<dbReference type="FunFam" id="3.30.505.10:FF:000026">
    <property type="entry name" value="adapter molecule crk isoform X1"/>
    <property type="match status" value="1"/>
</dbReference>
<dbReference type="Gene3D" id="3.30.505.10">
    <property type="entry name" value="SH2 domain"/>
    <property type="match status" value="1"/>
</dbReference>
<dbReference type="Gene3D" id="2.30.30.40">
    <property type="entry name" value="SH3 Domains"/>
    <property type="match status" value="2"/>
</dbReference>
<dbReference type="InterPro" id="IPR035458">
    <property type="entry name" value="CRK_SH3_C"/>
</dbReference>
<dbReference type="InterPro" id="IPR035457">
    <property type="entry name" value="CRK_SH3_N"/>
</dbReference>
<dbReference type="InterPro" id="IPR000980">
    <property type="entry name" value="SH2"/>
</dbReference>
<dbReference type="InterPro" id="IPR036860">
    <property type="entry name" value="SH2_dom_sf"/>
</dbReference>
<dbReference type="InterPro" id="IPR036028">
    <property type="entry name" value="SH3-like_dom_sf"/>
</dbReference>
<dbReference type="InterPro" id="IPR001452">
    <property type="entry name" value="SH3_domain"/>
</dbReference>
<dbReference type="InterPro" id="IPR051184">
    <property type="entry name" value="Tyrosine-phos_adapter"/>
</dbReference>
<dbReference type="PANTHER" id="PTHR19969:SF5">
    <property type="entry name" value="CRK-LIKE PROTEIN"/>
    <property type="match status" value="1"/>
</dbReference>
<dbReference type="PANTHER" id="PTHR19969">
    <property type="entry name" value="SH2-SH3 ADAPTOR PROTEIN-RELATED"/>
    <property type="match status" value="1"/>
</dbReference>
<dbReference type="Pfam" id="PF00017">
    <property type="entry name" value="SH2"/>
    <property type="match status" value="1"/>
</dbReference>
<dbReference type="Pfam" id="PF00018">
    <property type="entry name" value="SH3_1"/>
    <property type="match status" value="1"/>
</dbReference>
<dbReference type="Pfam" id="PF07653">
    <property type="entry name" value="SH3_2"/>
    <property type="match status" value="1"/>
</dbReference>
<dbReference type="PRINTS" id="PR00401">
    <property type="entry name" value="SH2DOMAIN"/>
</dbReference>
<dbReference type="PRINTS" id="PR00452">
    <property type="entry name" value="SH3DOMAIN"/>
</dbReference>
<dbReference type="SMART" id="SM00252">
    <property type="entry name" value="SH2"/>
    <property type="match status" value="1"/>
</dbReference>
<dbReference type="SMART" id="SM00326">
    <property type="entry name" value="SH3"/>
    <property type="match status" value="2"/>
</dbReference>
<dbReference type="SUPFAM" id="SSF55550">
    <property type="entry name" value="SH2 domain"/>
    <property type="match status" value="1"/>
</dbReference>
<dbReference type="SUPFAM" id="SSF50044">
    <property type="entry name" value="SH3-domain"/>
    <property type="match status" value="1"/>
</dbReference>
<dbReference type="PROSITE" id="PS50001">
    <property type="entry name" value="SH2"/>
    <property type="match status" value="1"/>
</dbReference>
<dbReference type="PROSITE" id="PS50002">
    <property type="entry name" value="SH3"/>
    <property type="match status" value="2"/>
</dbReference>
<comment type="function">
    <text evidence="3">Adapter protein which interacts with C-terminal portion of mbc, homolog of human DOCK180. May play a role in cellular processes throughout development.</text>
</comment>
<comment type="interaction">
    <interactant intactId="EBI-99477">
        <id>Q9XYM0</id>
    </interactant>
    <interactant intactId="EBI-177001">
        <id>Q9VCH4</id>
        <label>mbc</label>
    </interactant>
    <organismsDiffer>false</organismsDiffer>
    <experiments>3</experiments>
</comment>
<comment type="tissue specificity">
    <text evidence="3">Embryonic zygotic expression is seen in invaginating presumptive mesoderm and ectodermally derived tissues during gastrulation. At stage 8, expression is also seen in anterior and posterior midgut and cephalic furrow. By stage 9, expression is highest in visceral mesoderm of anterior and posterior midgut, ventral nerve cord and somatic mesoderm.</text>
</comment>
<comment type="developmental stage">
    <text evidence="3">Expressed both maternally and zygotically throughout embryogenesis, declines during larval stages and reappears during pupation.</text>
</comment>
<comment type="similarity">
    <text evidence="4">Belongs to the CRK family.</text>
</comment>
<accession>Q9XYM0</accession>
<accession>Q53XD2</accession>
<keyword id="KW-0217">Developmental protein</keyword>
<keyword id="KW-1185">Reference proteome</keyword>
<keyword id="KW-0677">Repeat</keyword>
<keyword id="KW-0727">SH2 domain</keyword>
<keyword id="KW-0728">SH3 domain</keyword>
<proteinExistence type="evidence at protein level"/>